<evidence type="ECO:0000250" key="1">
    <source>
        <dbReference type="UniProtKB" id="P80368"/>
    </source>
</evidence>
<evidence type="ECO:0000269" key="2">
    <source>
    </source>
</evidence>
<evidence type="ECO:0000303" key="3">
    <source>
    </source>
</evidence>
<evidence type="ECO:0000305" key="4"/>
<organism evidence="4">
    <name type="scientific">Actinobacillus suis</name>
    <dbReference type="NCBI Taxonomy" id="716"/>
    <lineage>
        <taxon>Bacteria</taxon>
        <taxon>Pseudomonadati</taxon>
        <taxon>Pseudomonadota</taxon>
        <taxon>Gammaproteobacteria</taxon>
        <taxon>Pasteurellales</taxon>
        <taxon>Pasteurellaceae</taxon>
        <taxon>Actinobacillus</taxon>
    </lineage>
</organism>
<reference evidence="4" key="1">
    <citation type="journal article" date="1996" name="Zentralbl. Bakteriol.">
        <title>Serological and biochemical properties of the major outer membrane protein within strains of the genus Actinobacillus.</title>
        <authorList>
            <person name="Hartmann L."/>
            <person name="Schroeder W."/>
            <person name="Luebke-Becker A."/>
        </authorList>
    </citation>
    <scope>PROTEIN SEQUENCE</scope>
    <scope>SUBCELLULAR LOCATION</scope>
    <source>
        <strain evidence="2">S 76 H2</strain>
    </source>
</reference>
<name>OMP1_ACTSU</name>
<protein>
    <recommendedName>
        <fullName>Major outer membrane protein</fullName>
        <shortName>MOMP</shortName>
    </recommendedName>
</protein>
<dbReference type="GO" id="GO:0009279">
    <property type="term" value="C:cell outer membrane"/>
    <property type="evidence" value="ECO:0007669"/>
    <property type="project" value="UniProtKB-SubCell"/>
</dbReference>
<dbReference type="GO" id="GO:0046930">
    <property type="term" value="C:pore complex"/>
    <property type="evidence" value="ECO:0007669"/>
    <property type="project" value="UniProtKB-KW"/>
</dbReference>
<dbReference type="GO" id="GO:0015288">
    <property type="term" value="F:porin activity"/>
    <property type="evidence" value="ECO:0007669"/>
    <property type="project" value="UniProtKB-KW"/>
</dbReference>
<dbReference type="GO" id="GO:0006811">
    <property type="term" value="P:monoatomic ion transport"/>
    <property type="evidence" value="ECO:0007669"/>
    <property type="project" value="UniProtKB-KW"/>
</dbReference>
<feature type="chain" id="PRO_0000198025" description="Major outer membrane protein">
    <location>
        <begin position="1"/>
        <end position="21" status="greater than"/>
    </location>
</feature>
<feature type="non-terminal residue" evidence="3">
    <location>
        <position position="21"/>
    </location>
</feature>
<accession>P80442</accession>
<proteinExistence type="evidence at protein level"/>
<sequence>VTVYDAEGTKVQVDGSLRLVE</sequence>
<keyword id="KW-0998">Cell outer membrane</keyword>
<keyword id="KW-0903">Direct protein sequencing</keyword>
<keyword id="KW-1015">Disulfide bond</keyword>
<keyword id="KW-0406">Ion transport</keyword>
<keyword id="KW-0472">Membrane</keyword>
<keyword id="KW-0626">Porin</keyword>
<keyword id="KW-0812">Transmembrane</keyword>
<keyword id="KW-1134">Transmembrane beta strand</keyword>
<keyword id="KW-0813">Transport</keyword>
<comment type="function">
    <text evidence="1">Structural rigidity of the outer membrane of elementary bodies and porin forming, permitting diffusion of solutes through the intracellular reticulate body membrane.</text>
</comment>
<comment type="subunit">
    <text evidence="1">Disulfide bond interactions within and between MOMP molecules and other components form high molecular-weight oligomers.</text>
</comment>
<comment type="subcellular location">
    <subcellularLocation>
        <location evidence="2">Cell outer membrane</location>
        <topology evidence="2">Multi-pass membrane protein</topology>
    </subcellularLocation>
</comment>